<name>SLYX_ECO27</name>
<accession>B7UK58</accession>
<reference key="1">
    <citation type="journal article" date="2009" name="J. Bacteriol.">
        <title>Complete genome sequence and comparative genome analysis of enteropathogenic Escherichia coli O127:H6 strain E2348/69.</title>
        <authorList>
            <person name="Iguchi A."/>
            <person name="Thomson N.R."/>
            <person name="Ogura Y."/>
            <person name="Saunders D."/>
            <person name="Ooka T."/>
            <person name="Henderson I.R."/>
            <person name="Harris D."/>
            <person name="Asadulghani M."/>
            <person name="Kurokawa K."/>
            <person name="Dean P."/>
            <person name="Kenny B."/>
            <person name="Quail M.A."/>
            <person name="Thurston S."/>
            <person name="Dougan G."/>
            <person name="Hayashi T."/>
            <person name="Parkhill J."/>
            <person name="Frankel G."/>
        </authorList>
    </citation>
    <scope>NUCLEOTIDE SEQUENCE [LARGE SCALE GENOMIC DNA]</scope>
    <source>
        <strain>E2348/69 / EPEC</strain>
    </source>
</reference>
<keyword id="KW-1185">Reference proteome</keyword>
<feature type="chain" id="PRO_1000148005" description="Protein SlyX">
    <location>
        <begin position="1"/>
        <end position="72"/>
    </location>
</feature>
<feature type="region of interest" description="Disordered" evidence="2">
    <location>
        <begin position="52"/>
        <end position="72"/>
    </location>
</feature>
<feature type="compositionally biased region" description="Polar residues" evidence="2">
    <location>
        <begin position="55"/>
        <end position="65"/>
    </location>
</feature>
<dbReference type="EMBL" id="FM180568">
    <property type="protein sequence ID" value="CAS11145.1"/>
    <property type="molecule type" value="Genomic_DNA"/>
</dbReference>
<dbReference type="RefSeq" id="WP_001153615.1">
    <property type="nucleotide sequence ID" value="NC_011601.1"/>
</dbReference>
<dbReference type="SMR" id="B7UK58"/>
<dbReference type="KEGG" id="ecg:E2348C_3597"/>
<dbReference type="HOGENOM" id="CLU_180796_4_2_6"/>
<dbReference type="Proteomes" id="UP000008205">
    <property type="component" value="Chromosome"/>
</dbReference>
<dbReference type="Gene3D" id="1.20.5.300">
    <property type="match status" value="1"/>
</dbReference>
<dbReference type="HAMAP" id="MF_00715">
    <property type="entry name" value="SlyX"/>
    <property type="match status" value="1"/>
</dbReference>
<dbReference type="InterPro" id="IPR007236">
    <property type="entry name" value="SlyX"/>
</dbReference>
<dbReference type="NCBIfam" id="NF002750">
    <property type="entry name" value="PRK02793.1"/>
    <property type="match status" value="1"/>
</dbReference>
<dbReference type="PANTHER" id="PTHR36508">
    <property type="entry name" value="PROTEIN SLYX"/>
    <property type="match status" value="1"/>
</dbReference>
<dbReference type="PANTHER" id="PTHR36508:SF1">
    <property type="entry name" value="PROTEIN SLYX"/>
    <property type="match status" value="1"/>
</dbReference>
<dbReference type="Pfam" id="PF04102">
    <property type="entry name" value="SlyX"/>
    <property type="match status" value="1"/>
</dbReference>
<protein>
    <recommendedName>
        <fullName evidence="1">Protein SlyX</fullName>
    </recommendedName>
</protein>
<sequence length="72" mass="8214">MQDLSLEARLAELESRLAFQEITIEELNVTVTAHEMEMAKLRDHLRLLTEKLKASQPSNIASQAEETPPPHY</sequence>
<comment type="similarity">
    <text evidence="1">Belongs to the SlyX family.</text>
</comment>
<evidence type="ECO:0000255" key="1">
    <source>
        <dbReference type="HAMAP-Rule" id="MF_00715"/>
    </source>
</evidence>
<evidence type="ECO:0000256" key="2">
    <source>
        <dbReference type="SAM" id="MobiDB-lite"/>
    </source>
</evidence>
<proteinExistence type="inferred from homology"/>
<organism>
    <name type="scientific">Escherichia coli O127:H6 (strain E2348/69 / EPEC)</name>
    <dbReference type="NCBI Taxonomy" id="574521"/>
    <lineage>
        <taxon>Bacteria</taxon>
        <taxon>Pseudomonadati</taxon>
        <taxon>Pseudomonadota</taxon>
        <taxon>Gammaproteobacteria</taxon>
        <taxon>Enterobacterales</taxon>
        <taxon>Enterobacteriaceae</taxon>
        <taxon>Escherichia</taxon>
    </lineage>
</organism>
<gene>
    <name evidence="1" type="primary">slyX</name>
    <name type="ordered locus">E2348C_3597</name>
</gene>